<accession>P40962</accession>
<accession>D6W2E0</accession>
<feature type="chain" id="PRO_0000046850" description="Zinc finger protein RTS2">
    <location>
        <begin position="1"/>
        <end position="232"/>
    </location>
</feature>
<feature type="zinc finger region" description="C2H2-type">
    <location>
        <begin position="24"/>
        <end position="48"/>
    </location>
</feature>
<feature type="region of interest" description="Disordered" evidence="1">
    <location>
        <begin position="180"/>
        <end position="199"/>
    </location>
</feature>
<feature type="region of interest" description="Disordered" evidence="1">
    <location>
        <begin position="211"/>
        <end position="232"/>
    </location>
</feature>
<organism>
    <name type="scientific">Saccharomyces cerevisiae (strain ATCC 204508 / S288c)</name>
    <name type="common">Baker's yeast</name>
    <dbReference type="NCBI Taxonomy" id="559292"/>
    <lineage>
        <taxon>Eukaryota</taxon>
        <taxon>Fungi</taxon>
        <taxon>Dikarya</taxon>
        <taxon>Ascomycota</taxon>
        <taxon>Saccharomycotina</taxon>
        <taxon>Saccharomycetes</taxon>
        <taxon>Saccharomycetales</taxon>
        <taxon>Saccharomycetaceae</taxon>
        <taxon>Saccharomyces</taxon>
    </lineage>
</organism>
<proteinExistence type="evidence at protein level"/>
<name>RTS2_YEAST</name>
<evidence type="ECO:0000256" key="1">
    <source>
        <dbReference type="SAM" id="MobiDB-lite"/>
    </source>
</evidence>
<evidence type="ECO:0000269" key="2">
    <source>
    </source>
</evidence>
<evidence type="ECO:0000305" key="3"/>
<reference key="1">
    <citation type="submission" date="1994-10" db="EMBL/GenBank/DDBJ databases">
        <authorList>
            <person name="Huffaker T.C."/>
        </authorList>
    </citation>
    <scope>NUCLEOTIDE SEQUENCE [GENOMIC DNA]</scope>
    <source>
        <strain>ATCC 204508 / S288c</strain>
    </source>
</reference>
<reference key="2">
    <citation type="journal article" date="1997" name="Yeast">
        <title>The sequence of a 54.7 kb fragment of yeast chromosome XV reveals the presence of two tRNAs and 24 new open reading frames.</title>
        <authorList>
            <person name="Valens M."/>
            <person name="Bohn C."/>
            <person name="Daignan-Fornier B."/>
            <person name="Dang V.-D."/>
            <person name="Bolotin-Fukuhara M."/>
        </authorList>
    </citation>
    <scope>NUCLEOTIDE SEQUENCE [GENOMIC DNA]</scope>
</reference>
<reference key="3">
    <citation type="journal article" date="1997" name="Nature">
        <title>The nucleotide sequence of Saccharomyces cerevisiae chromosome XV.</title>
        <authorList>
            <person name="Dujon B."/>
            <person name="Albermann K."/>
            <person name="Aldea M."/>
            <person name="Alexandraki D."/>
            <person name="Ansorge W."/>
            <person name="Arino J."/>
            <person name="Benes V."/>
            <person name="Bohn C."/>
            <person name="Bolotin-Fukuhara M."/>
            <person name="Bordonne R."/>
            <person name="Boyer J."/>
            <person name="Camasses A."/>
            <person name="Casamayor A."/>
            <person name="Casas C."/>
            <person name="Cheret G."/>
            <person name="Cziepluch C."/>
            <person name="Daignan-Fornier B."/>
            <person name="Dang V.-D."/>
            <person name="de Haan M."/>
            <person name="Delius H."/>
            <person name="Durand P."/>
            <person name="Fairhead C."/>
            <person name="Feldmann H."/>
            <person name="Gaillon L."/>
            <person name="Galisson F."/>
            <person name="Gamo F.-J."/>
            <person name="Gancedo C."/>
            <person name="Goffeau A."/>
            <person name="Goulding S.E."/>
            <person name="Grivell L.A."/>
            <person name="Habbig B."/>
            <person name="Hand N.J."/>
            <person name="Hani J."/>
            <person name="Hattenhorst U."/>
            <person name="Hebling U."/>
            <person name="Hernando Y."/>
            <person name="Herrero E."/>
            <person name="Heumann K."/>
            <person name="Hiesel R."/>
            <person name="Hilger F."/>
            <person name="Hofmann B."/>
            <person name="Hollenberg C.P."/>
            <person name="Hughes B."/>
            <person name="Jauniaux J.-C."/>
            <person name="Kalogeropoulos A."/>
            <person name="Katsoulou C."/>
            <person name="Kordes E."/>
            <person name="Lafuente M.J."/>
            <person name="Landt O."/>
            <person name="Louis E.J."/>
            <person name="Maarse A.C."/>
            <person name="Madania A."/>
            <person name="Mannhaupt G."/>
            <person name="Marck C."/>
            <person name="Martin R.P."/>
            <person name="Mewes H.-W."/>
            <person name="Michaux G."/>
            <person name="Paces V."/>
            <person name="Parle-McDermott A.G."/>
            <person name="Pearson B.M."/>
            <person name="Perrin A."/>
            <person name="Pettersson B."/>
            <person name="Poch O."/>
            <person name="Pohl T.M."/>
            <person name="Poirey R."/>
            <person name="Portetelle D."/>
            <person name="Pujol A."/>
            <person name="Purnelle B."/>
            <person name="Ramezani Rad M."/>
            <person name="Rechmann S."/>
            <person name="Schwager C."/>
            <person name="Schweizer M."/>
            <person name="Sor F."/>
            <person name="Sterky F."/>
            <person name="Tarassov I.A."/>
            <person name="Teodoru C."/>
            <person name="Tettelin H."/>
            <person name="Thierry A."/>
            <person name="Tobiasch E."/>
            <person name="Tzermia M."/>
            <person name="Uhlen M."/>
            <person name="Unseld M."/>
            <person name="Valens M."/>
            <person name="Vandenbol M."/>
            <person name="Vetter I."/>
            <person name="Vlcek C."/>
            <person name="Voet M."/>
            <person name="Volckaert G."/>
            <person name="Voss H."/>
            <person name="Wambutt R."/>
            <person name="Wedler H."/>
            <person name="Wiemann S."/>
            <person name="Winsor B."/>
            <person name="Wolfe K.H."/>
            <person name="Zollner A."/>
            <person name="Zumstein E."/>
            <person name="Kleine K."/>
        </authorList>
    </citation>
    <scope>NUCLEOTIDE SEQUENCE [LARGE SCALE GENOMIC DNA]</scope>
    <source>
        <strain>ATCC 204508 / S288c</strain>
    </source>
</reference>
<reference key="4">
    <citation type="journal article" date="2014" name="G3 (Bethesda)">
        <title>The reference genome sequence of Saccharomyces cerevisiae: Then and now.</title>
        <authorList>
            <person name="Engel S.R."/>
            <person name="Dietrich F.S."/>
            <person name="Fisk D.G."/>
            <person name="Binkley G."/>
            <person name="Balakrishnan R."/>
            <person name="Costanzo M.C."/>
            <person name="Dwight S.S."/>
            <person name="Hitz B.C."/>
            <person name="Karra K."/>
            <person name="Nash R.S."/>
            <person name="Weng S."/>
            <person name="Wong E.D."/>
            <person name="Lloyd P."/>
            <person name="Skrzypek M.S."/>
            <person name="Miyasato S.R."/>
            <person name="Simison M."/>
            <person name="Cherry J.M."/>
        </authorList>
    </citation>
    <scope>GENOME REANNOTATION</scope>
    <source>
        <strain>ATCC 204508 / S288c</strain>
    </source>
</reference>
<reference key="5">
    <citation type="journal article" date="2003" name="Nature">
        <title>Global analysis of protein expression in yeast.</title>
        <authorList>
            <person name="Ghaemmaghami S."/>
            <person name="Huh W.-K."/>
            <person name="Bower K."/>
            <person name="Howson R.W."/>
            <person name="Belle A."/>
            <person name="Dephoure N."/>
            <person name="O'Shea E.K."/>
            <person name="Weissman J.S."/>
        </authorList>
    </citation>
    <scope>LEVEL OF PROTEIN EXPRESSION [LARGE SCALE ANALYSIS]</scope>
</reference>
<reference key="6">
    <citation type="journal article" date="2009" name="Science">
        <title>Global analysis of Cdk1 substrate phosphorylation sites provides insights into evolution.</title>
        <authorList>
            <person name="Holt L.J."/>
            <person name="Tuch B.B."/>
            <person name="Villen J."/>
            <person name="Johnson A.D."/>
            <person name="Gygi S.P."/>
            <person name="Morgan D.O."/>
        </authorList>
    </citation>
    <scope>IDENTIFICATION BY MASS SPECTROMETRY [LARGE SCALE ANALYSIS]</scope>
</reference>
<protein>
    <recommendedName>
        <fullName>Zinc finger protein RTS2</fullName>
    </recommendedName>
</protein>
<gene>
    <name type="primary">RTS2</name>
    <name type="ordered locus">YOR077W</name>
    <name type="ORF">YOR29-28</name>
</gene>
<sequence>MADYDSAKYWSKQGARRGLQKTRYYCQICQRQCKDANGFQSHNKSPSHLRKISQVTAEDARRYNIQFEKGFLQLLKQRHGEKWIDANKVYNEYVQDRDHVHMNATMHRSLTQFVRYLGRAGKVDVDMDIDDTSENVEGPLLIRIHPSSLSSPSEDGMLRSQQEEQEVIAAELLKRQLNRAKRQTEKVYQPEMKSEISGDSTLKRVQVTFHGNGRVNKKKKKVPPRKDGIKFR</sequence>
<dbReference type="EMBL" id="U16133">
    <property type="protein sequence ID" value="AAA51874.1"/>
    <property type="molecule type" value="Genomic_DNA"/>
</dbReference>
<dbReference type="EMBL" id="Z74985">
    <property type="protein sequence ID" value="CAA99270.1"/>
    <property type="molecule type" value="Genomic_DNA"/>
</dbReference>
<dbReference type="EMBL" id="Z70678">
    <property type="protein sequence ID" value="CAA94562.1"/>
    <property type="molecule type" value="Genomic_DNA"/>
</dbReference>
<dbReference type="EMBL" id="BK006948">
    <property type="protein sequence ID" value="DAA10856.1"/>
    <property type="molecule type" value="Genomic_DNA"/>
</dbReference>
<dbReference type="PIR" id="S50239">
    <property type="entry name" value="S50239"/>
</dbReference>
<dbReference type="RefSeq" id="NP_014720.1">
    <property type="nucleotide sequence ID" value="NM_001183496.1"/>
</dbReference>
<dbReference type="SMR" id="P40962"/>
<dbReference type="BioGRID" id="34476">
    <property type="interactions" value="88"/>
</dbReference>
<dbReference type="FunCoup" id="P40962">
    <property type="interactions" value="386"/>
</dbReference>
<dbReference type="IntAct" id="P40962">
    <property type="interactions" value="17"/>
</dbReference>
<dbReference type="STRING" id="4932.YOR077W"/>
<dbReference type="iPTMnet" id="P40962"/>
<dbReference type="PaxDb" id="4932-YOR077W"/>
<dbReference type="PeptideAtlas" id="P40962"/>
<dbReference type="EnsemblFungi" id="YOR077W_mRNA">
    <property type="protein sequence ID" value="YOR077W"/>
    <property type="gene ID" value="YOR077W"/>
</dbReference>
<dbReference type="GeneID" id="854244"/>
<dbReference type="KEGG" id="sce:YOR077W"/>
<dbReference type="AGR" id="SGD:S000005603"/>
<dbReference type="SGD" id="S000005603">
    <property type="gene designation" value="RTS2"/>
</dbReference>
<dbReference type="VEuPathDB" id="FungiDB:YOR077W"/>
<dbReference type="eggNOG" id="KOG2837">
    <property type="taxonomic scope" value="Eukaryota"/>
</dbReference>
<dbReference type="GeneTree" id="ENSGT00390000005903"/>
<dbReference type="HOGENOM" id="CLU_030065_2_0_1"/>
<dbReference type="InParanoid" id="P40962"/>
<dbReference type="OMA" id="RRYNIQF"/>
<dbReference type="OrthoDB" id="10266249at2759"/>
<dbReference type="BioCyc" id="YEAST:G3O-33614-MONOMER"/>
<dbReference type="BioGRID-ORCS" id="854244">
    <property type="hits" value="4 hits in 10 CRISPR screens"/>
</dbReference>
<dbReference type="PRO" id="PR:P40962"/>
<dbReference type="Proteomes" id="UP000002311">
    <property type="component" value="Chromosome XV"/>
</dbReference>
<dbReference type="RNAct" id="P40962">
    <property type="molecule type" value="protein"/>
</dbReference>
<dbReference type="GO" id="GO:0005737">
    <property type="term" value="C:cytoplasm"/>
    <property type="evidence" value="ECO:0007005"/>
    <property type="project" value="SGD"/>
</dbReference>
<dbReference type="GO" id="GO:0005634">
    <property type="term" value="C:nucleus"/>
    <property type="evidence" value="ECO:0007005"/>
    <property type="project" value="SGD"/>
</dbReference>
<dbReference type="GO" id="GO:0003677">
    <property type="term" value="F:DNA binding"/>
    <property type="evidence" value="ECO:0007669"/>
    <property type="project" value="UniProtKB-KW"/>
</dbReference>
<dbReference type="GO" id="GO:0008270">
    <property type="term" value="F:zinc ion binding"/>
    <property type="evidence" value="ECO:0007669"/>
    <property type="project" value="UniProtKB-KW"/>
</dbReference>
<dbReference type="FunFam" id="1.10.10.2030:FF:000003">
    <property type="entry name" value="Rts2p"/>
    <property type="match status" value="1"/>
</dbReference>
<dbReference type="Gene3D" id="1.10.10.2030">
    <property type="entry name" value="DNA/RNA-binding protein Kin17, conserved domain"/>
    <property type="match status" value="1"/>
</dbReference>
<dbReference type="InterPro" id="IPR056767">
    <property type="entry name" value="C2H2-Znf_KIN17"/>
</dbReference>
<dbReference type="InterPro" id="IPR019447">
    <property type="entry name" value="DNA/RNA-bd_Kin17_WH-like_dom"/>
</dbReference>
<dbReference type="InterPro" id="IPR037321">
    <property type="entry name" value="KIN17-like"/>
</dbReference>
<dbReference type="InterPro" id="IPR038254">
    <property type="entry name" value="KIN17_WH-like_sf"/>
</dbReference>
<dbReference type="InterPro" id="IPR003604">
    <property type="entry name" value="Matrin/U1-like-C_Znf_C2H2"/>
</dbReference>
<dbReference type="InterPro" id="IPR036236">
    <property type="entry name" value="Znf_C2H2_sf"/>
</dbReference>
<dbReference type="InterPro" id="IPR013087">
    <property type="entry name" value="Znf_C2H2_type"/>
</dbReference>
<dbReference type="PANTHER" id="PTHR12805:SF0">
    <property type="entry name" value="DNA_RNA-BINDING PROTEIN KIN17"/>
    <property type="match status" value="1"/>
</dbReference>
<dbReference type="PANTHER" id="PTHR12805">
    <property type="entry name" value="KIN17 KIN, ANTIGENIC DETERMINANT OF RECA PROTEIN HOMOLOG"/>
    <property type="match status" value="1"/>
</dbReference>
<dbReference type="Pfam" id="PF25095">
    <property type="entry name" value="C2H2-zf_KIN17"/>
    <property type="match status" value="1"/>
</dbReference>
<dbReference type="Pfam" id="PF10357">
    <property type="entry name" value="WH_KIN17"/>
    <property type="match status" value="1"/>
</dbReference>
<dbReference type="SMART" id="SM01253">
    <property type="entry name" value="Kin17_mid"/>
    <property type="match status" value="1"/>
</dbReference>
<dbReference type="SMART" id="SM00451">
    <property type="entry name" value="ZnF_U1"/>
    <property type="match status" value="1"/>
</dbReference>
<dbReference type="SUPFAM" id="SSF57667">
    <property type="entry name" value="beta-beta-alpha zinc fingers"/>
    <property type="match status" value="1"/>
</dbReference>
<dbReference type="PROSITE" id="PS00028">
    <property type="entry name" value="ZINC_FINGER_C2H2_1"/>
    <property type="match status" value="1"/>
</dbReference>
<keyword id="KW-0238">DNA-binding</keyword>
<keyword id="KW-0479">Metal-binding</keyword>
<keyword id="KW-0539">Nucleus</keyword>
<keyword id="KW-1185">Reference proteome</keyword>
<keyword id="KW-0862">Zinc</keyword>
<keyword id="KW-0863">Zinc-finger</keyword>
<comment type="subcellular location">
    <subcellularLocation>
        <location evidence="3">Nucleus</location>
    </subcellularLocation>
</comment>
<comment type="miscellaneous">
    <text evidence="2">Present with 4590 molecules/cell in log phase SD medium.</text>
</comment>